<keyword id="KW-0025">Alternative splicing</keyword>
<keyword id="KW-0333">Golgi apparatus</keyword>
<keyword id="KW-1267">Proteomics identification</keyword>
<keyword id="KW-1185">Reference proteome</keyword>
<name>GSAP_HUMAN</name>
<feature type="chain" id="PRO_0000335809" description="Gamma-secretase-activating protein">
    <location>
        <begin position="1"/>
        <end position="854"/>
    </location>
</feature>
<feature type="chain" id="PRO_0000403728" description="Gamma-secretase-activating protein 16 kDa C-terminal form" evidence="1">
    <location>
        <begin position="734"/>
        <end position="854"/>
    </location>
</feature>
<feature type="splice variant" id="VSP_033771" description="In isoform 4." evidence="4">
    <location>
        <begin position="1"/>
        <end position="606"/>
    </location>
</feature>
<feature type="splice variant" id="VSP_033772" description="In isoform 2." evidence="6">
    <original>Q</original>
    <variation>QWRQRADLNTNRVLSDFLK</variation>
    <location>
        <position position="446"/>
    </location>
</feature>
<feature type="splice variant" id="VSP_033773" description="In isoform 2 and isoform 3." evidence="5">
    <original>K</original>
    <variation>V</variation>
    <location>
        <position position="559"/>
    </location>
</feature>
<feature type="splice variant" id="VSP_033774" description="In isoform 2 and isoform 3." evidence="5">
    <location>
        <begin position="560"/>
        <end position="854"/>
    </location>
</feature>
<feature type="sequence variant" id="VAR_043467" description="In dbSNP:rs6949654." evidence="2">
    <original>H</original>
    <variation>R</variation>
    <location>
        <position position="47"/>
    </location>
</feature>
<feature type="sequence variant" id="VAR_043468" description="In dbSNP:rs1527263.">
    <original>G</original>
    <variation>E</variation>
    <location>
        <position position="305"/>
    </location>
</feature>
<feature type="sequence variant" id="VAR_043469" description="In dbSNP:rs17151692.">
    <original>V</original>
    <variation>I</variation>
    <location>
        <position position="649"/>
    </location>
</feature>
<feature type="sequence variant" id="VAR_043470" description="In dbSNP:rs17151689.">
    <original>W</original>
    <variation>L</variation>
    <location>
        <position position="653"/>
    </location>
</feature>
<comment type="function">
    <text evidence="3">Regulator of gamma-secretase activity, which specifically activates the production of amyloid-beta protein (amyloid-beta protein 40 and amyloid-beta protein 42), without affecting the cleavage of other gamma-secretase targets such has Notch. The gamma-secretase complex is an endoprotease complex that catalyzes the intramembrane cleavage of integral membrane proteins such as Notch receptors and APP (amyloid-beta precursor protein). Specifically promotes the gamma-cleavage of APP CTF-alpha (also named APP-CTF) by the gamma-secretase complex to generate amyloid-beta, while it reduces the epsilon-cleavage of APP CTF-alpha, leading to a low production of AICD.</text>
</comment>
<comment type="subunit">
    <text evidence="3">Interacts with APP; specifically interacts with the CTF-alpha product of APP. Interacts with the gamma-secretase complex.</text>
</comment>
<comment type="interaction">
    <interactant intactId="EBI-15875313">
        <id>A4D1B5</id>
    </interactant>
    <interactant intactId="EBI-77613">
        <id>P05067</id>
        <label>APP</label>
    </interactant>
    <organismsDiffer>false</organismsDiffer>
    <experiments>3</experiments>
</comment>
<comment type="subcellular location">
    <subcellularLocation>
        <location evidence="3">Golgi apparatus</location>
        <location evidence="3">trans-Golgi network</location>
    </subcellularLocation>
</comment>
<comment type="alternative products">
    <event type="alternative splicing"/>
    <isoform>
        <id>A4D1B5-1</id>
        <name>1</name>
        <sequence type="displayed"/>
    </isoform>
    <isoform>
        <id>A4D1B5-2</id>
        <name>2</name>
        <sequence type="described" ref="VSP_033772 VSP_033773 VSP_033774"/>
    </isoform>
    <isoform>
        <id>A4D1B5-3</id>
        <name>3</name>
        <sequence type="described" ref="VSP_033773 VSP_033774"/>
    </isoform>
    <isoform>
        <id>A4D1B5-4</id>
        <name>4</name>
        <sequence type="described" ref="VSP_033771"/>
    </isoform>
</comment>
<comment type="tissue specificity">
    <text evidence="3">Widely expressed.</text>
</comment>
<comment type="PTM">
    <text evidence="3">The protein is first synthesized as a holoprotein form of 98 kDa and rapidly processed into the gamma-secretase-activating protein 16 kDa C-terminal form, which constitutes the predominant form.</text>
</comment>
<comment type="miscellaneous">
    <text evidence="7">The gamma-secretase regulator activity is specifically inhibited by imatinib (also known as STI571 or Gleevec), an anticancer drug that selectively decreases amyloid-beta protein production. Imatinib binds PION/GSAP and acts by preventing PION/GSAP interaction with the gamma-secretase substrate, CTF-alpha (PubMed:20811458).</text>
</comment>
<comment type="miscellaneous">
    <text evidence="7">Its role as an activator of amyloid-beta protein production makes it a promising therapeutic target for the treatment of Alzheimer disease.</text>
</comment>
<comment type="similarity">
    <text evidence="6">Belongs to the GSAP family.</text>
</comment>
<comment type="sequence caution" evidence="6">
    <conflict type="erroneous initiation">
        <sequence resource="EMBL-CDS" id="CAD39023"/>
    </conflict>
    <text>Truncated N-terminus.</text>
</comment>
<evidence type="ECO:0000255" key="1"/>
<evidence type="ECO:0000269" key="2">
    <source>
    </source>
</evidence>
<evidence type="ECO:0000269" key="3">
    <source>
    </source>
</evidence>
<evidence type="ECO:0000303" key="4">
    <source>
    </source>
</evidence>
<evidence type="ECO:0000303" key="5">
    <source>
    </source>
</evidence>
<evidence type="ECO:0000305" key="6"/>
<evidence type="ECO:0000305" key="7">
    <source>
    </source>
</evidence>
<gene>
    <name type="primary">GSAP</name>
    <name type="synonym">PION</name>
</gene>
<dbReference type="EMBL" id="AC004921">
    <property type="status" value="NOT_ANNOTATED_CDS"/>
    <property type="molecule type" value="Genomic_DNA"/>
</dbReference>
<dbReference type="EMBL" id="AC073635">
    <property type="status" value="NOT_ANNOTATED_CDS"/>
    <property type="molecule type" value="Genomic_DNA"/>
</dbReference>
<dbReference type="EMBL" id="CH236949">
    <property type="protein sequence ID" value="EAL24199.1"/>
    <property type="molecule type" value="Genomic_DNA"/>
</dbReference>
<dbReference type="EMBL" id="CH236949">
    <property type="protein sequence ID" value="EAL24200.1"/>
    <property type="molecule type" value="Genomic_DNA"/>
</dbReference>
<dbReference type="EMBL" id="CH471091">
    <property type="protein sequence ID" value="EAW77039.1"/>
    <property type="molecule type" value="Genomic_DNA"/>
</dbReference>
<dbReference type="EMBL" id="BC101499">
    <property type="protein sequence ID" value="AAI01500.2"/>
    <property type="molecule type" value="mRNA"/>
</dbReference>
<dbReference type="EMBL" id="AL834358">
    <property type="protein sequence ID" value="CAD39023.2"/>
    <property type="status" value="ALT_INIT"/>
    <property type="molecule type" value="mRNA"/>
</dbReference>
<dbReference type="EMBL" id="AL079277">
    <property type="protein sequence ID" value="CAB45152.1"/>
    <property type="molecule type" value="mRNA"/>
</dbReference>
<dbReference type="EMBL" id="AL079297">
    <property type="protein sequence ID" value="CAB45193.1"/>
    <property type="molecule type" value="mRNA"/>
</dbReference>
<dbReference type="CCDS" id="CCDS34672.2">
    <molecule id="A4D1B5-1"/>
</dbReference>
<dbReference type="RefSeq" id="NP_059135.2">
    <molecule id="A4D1B5-1"/>
    <property type="nucleotide sequence ID" value="NM_017439.4"/>
</dbReference>
<dbReference type="BioGRID" id="119901">
    <property type="interactions" value="6"/>
</dbReference>
<dbReference type="DIP" id="DIP-59240N"/>
<dbReference type="FunCoup" id="A4D1B5">
    <property type="interactions" value="349"/>
</dbReference>
<dbReference type="IntAct" id="A4D1B5">
    <property type="interactions" value="2"/>
</dbReference>
<dbReference type="STRING" id="9606.ENSP00000257626"/>
<dbReference type="BindingDB" id="A4D1B5"/>
<dbReference type="ChEMBL" id="CHEMBL3638343"/>
<dbReference type="iPTMnet" id="A4D1B5"/>
<dbReference type="PhosphoSitePlus" id="A4D1B5"/>
<dbReference type="BioMuta" id="GSAP"/>
<dbReference type="MassIVE" id="A4D1B5"/>
<dbReference type="PaxDb" id="9606-ENSP00000257626"/>
<dbReference type="PeptideAtlas" id="A4D1B5"/>
<dbReference type="TopDownProteomics" id="A4D1B5-1">
    <molecule id="A4D1B5-1"/>
</dbReference>
<dbReference type="Antibodypedia" id="15032">
    <property type="antibodies" value="191 antibodies from 21 providers"/>
</dbReference>
<dbReference type="DNASU" id="54103"/>
<dbReference type="Ensembl" id="ENST00000257626.12">
    <molecule id="A4D1B5-1"/>
    <property type="protein sequence ID" value="ENSP00000257626.7"/>
    <property type="gene ID" value="ENSG00000186088.16"/>
</dbReference>
<dbReference type="GeneID" id="54103"/>
<dbReference type="KEGG" id="hsa:54103"/>
<dbReference type="MANE-Select" id="ENST00000257626.12">
    <property type="protein sequence ID" value="ENSP00000257626.7"/>
    <property type="RefSeq nucleotide sequence ID" value="NM_017439.4"/>
    <property type="RefSeq protein sequence ID" value="NP_059135.2"/>
</dbReference>
<dbReference type="UCSC" id="uc003ugf.3">
    <molecule id="A4D1B5-1"/>
    <property type="organism name" value="human"/>
</dbReference>
<dbReference type="AGR" id="HGNC:28042"/>
<dbReference type="CTD" id="54103"/>
<dbReference type="DisGeNET" id="54103"/>
<dbReference type="GeneCards" id="GSAP"/>
<dbReference type="HGNC" id="HGNC:28042">
    <property type="gene designation" value="GSAP"/>
</dbReference>
<dbReference type="HPA" id="ENSG00000186088">
    <property type="expression patterns" value="Low tissue specificity"/>
</dbReference>
<dbReference type="MIM" id="613552">
    <property type="type" value="gene"/>
</dbReference>
<dbReference type="neXtProt" id="NX_A4D1B5"/>
<dbReference type="OpenTargets" id="ENSG00000186088"/>
<dbReference type="PharmGKB" id="PA164724500"/>
<dbReference type="VEuPathDB" id="HostDB:ENSG00000186088"/>
<dbReference type="eggNOG" id="ENOG502QWQK">
    <property type="taxonomic scope" value="Eukaryota"/>
</dbReference>
<dbReference type="GeneTree" id="ENSGT00390000012875"/>
<dbReference type="HOGENOM" id="CLU_008601_0_0_1"/>
<dbReference type="InParanoid" id="A4D1B5"/>
<dbReference type="OMA" id="CANQSRN"/>
<dbReference type="OrthoDB" id="9997853at2759"/>
<dbReference type="PAN-GO" id="A4D1B5">
    <property type="GO annotations" value="2 GO annotations based on evolutionary models"/>
</dbReference>
<dbReference type="PhylomeDB" id="A4D1B5"/>
<dbReference type="TreeFam" id="TF323853"/>
<dbReference type="PathwayCommons" id="A4D1B5"/>
<dbReference type="SignaLink" id="A4D1B5"/>
<dbReference type="BioGRID-ORCS" id="54103">
    <property type="hits" value="8 hits in 1140 CRISPR screens"/>
</dbReference>
<dbReference type="ChiTaRS" id="GSAP">
    <property type="organism name" value="human"/>
</dbReference>
<dbReference type="GeneWiki" id="Protein_pigeon_homolog"/>
<dbReference type="GenomeRNAi" id="54103"/>
<dbReference type="Pharos" id="A4D1B5">
    <property type="development level" value="Tchem"/>
</dbReference>
<dbReference type="PRO" id="PR:A4D1B5"/>
<dbReference type="Proteomes" id="UP000005640">
    <property type="component" value="Chromosome 7"/>
</dbReference>
<dbReference type="RNAct" id="A4D1B5">
    <property type="molecule type" value="protein"/>
</dbReference>
<dbReference type="Bgee" id="ENSG00000186088">
    <property type="expression patterns" value="Expressed in granulocyte and 192 other cell types or tissues"/>
</dbReference>
<dbReference type="ExpressionAtlas" id="A4D1B5">
    <property type="expression patterns" value="baseline and differential"/>
</dbReference>
<dbReference type="GO" id="GO:0005802">
    <property type="term" value="C:trans-Golgi network"/>
    <property type="evidence" value="ECO:0000314"/>
    <property type="project" value="UniProtKB"/>
</dbReference>
<dbReference type="GO" id="GO:0001540">
    <property type="term" value="F:amyloid-beta binding"/>
    <property type="evidence" value="ECO:0000314"/>
    <property type="project" value="UniProtKB"/>
</dbReference>
<dbReference type="GO" id="GO:1902004">
    <property type="term" value="P:positive regulation of amyloid-beta formation"/>
    <property type="evidence" value="ECO:0000314"/>
    <property type="project" value="UniProtKB"/>
</dbReference>
<dbReference type="GO" id="GO:0030162">
    <property type="term" value="P:regulation of proteolysis"/>
    <property type="evidence" value="ECO:0000314"/>
    <property type="project" value="UniProtKB"/>
</dbReference>
<dbReference type="CDD" id="cd23105">
    <property type="entry name" value="GSAP"/>
    <property type="match status" value="1"/>
</dbReference>
<dbReference type="InterPro" id="IPR028010">
    <property type="entry name" value="GSAP_C_dom"/>
</dbReference>
<dbReference type="InterPro" id="IPR026172">
    <property type="entry name" value="GSAP_fam"/>
</dbReference>
<dbReference type="PANTHER" id="PTHR13630">
    <property type="entry name" value="GAMMA-SECRETASE-ACTIVATING PROTEIN"/>
    <property type="match status" value="1"/>
</dbReference>
<dbReference type="PANTHER" id="PTHR13630:SF1">
    <property type="entry name" value="GAMMA-SECRETASE-ACTIVATING PROTEIN"/>
    <property type="match status" value="1"/>
</dbReference>
<dbReference type="Pfam" id="PF14959">
    <property type="entry name" value="GSAP-16"/>
    <property type="match status" value="1"/>
</dbReference>
<protein>
    <recommendedName>
        <fullName>Gamma-secretase-activating protein</fullName>
        <shortName>GSAP</shortName>
    </recommendedName>
    <alternativeName>
        <fullName>Protein pigeon homolog</fullName>
    </alternativeName>
    <component>
        <recommendedName>
            <fullName>Gamma-secretase-activating protein 16 kDa C-terminal form</fullName>
            <shortName>GSAP-16K</shortName>
        </recommendedName>
    </component>
</protein>
<accession>A4D1B5</accession>
<accession>A4D1B6</accession>
<accession>Q3MJC0</accession>
<accession>Q8ND73</accession>
<accession>Q9UMH3</accession>
<accession>Q9Y4L9</accession>
<reference key="1">
    <citation type="journal article" date="2003" name="Nature">
        <title>The DNA sequence of human chromosome 7.</title>
        <authorList>
            <person name="Hillier L.W."/>
            <person name="Fulton R.S."/>
            <person name="Fulton L.A."/>
            <person name="Graves T.A."/>
            <person name="Pepin K.H."/>
            <person name="Wagner-McPherson C."/>
            <person name="Layman D."/>
            <person name="Maas J."/>
            <person name="Jaeger S."/>
            <person name="Walker R."/>
            <person name="Wylie K."/>
            <person name="Sekhon M."/>
            <person name="Becker M.C."/>
            <person name="O'Laughlin M.D."/>
            <person name="Schaller M.E."/>
            <person name="Fewell G.A."/>
            <person name="Delehaunty K.D."/>
            <person name="Miner T.L."/>
            <person name="Nash W.E."/>
            <person name="Cordes M."/>
            <person name="Du H."/>
            <person name="Sun H."/>
            <person name="Edwards J."/>
            <person name="Bradshaw-Cordum H."/>
            <person name="Ali J."/>
            <person name="Andrews S."/>
            <person name="Isak A."/>
            <person name="Vanbrunt A."/>
            <person name="Nguyen C."/>
            <person name="Du F."/>
            <person name="Lamar B."/>
            <person name="Courtney L."/>
            <person name="Kalicki J."/>
            <person name="Ozersky P."/>
            <person name="Bielicki L."/>
            <person name="Scott K."/>
            <person name="Holmes A."/>
            <person name="Harkins R."/>
            <person name="Harris A."/>
            <person name="Strong C.M."/>
            <person name="Hou S."/>
            <person name="Tomlinson C."/>
            <person name="Dauphin-Kohlberg S."/>
            <person name="Kozlowicz-Reilly A."/>
            <person name="Leonard S."/>
            <person name="Rohlfing T."/>
            <person name="Rock S.M."/>
            <person name="Tin-Wollam A.-M."/>
            <person name="Abbott A."/>
            <person name="Minx P."/>
            <person name="Maupin R."/>
            <person name="Strowmatt C."/>
            <person name="Latreille P."/>
            <person name="Miller N."/>
            <person name="Johnson D."/>
            <person name="Murray J."/>
            <person name="Woessner J.P."/>
            <person name="Wendl M.C."/>
            <person name="Yang S.-P."/>
            <person name="Schultz B.R."/>
            <person name="Wallis J.W."/>
            <person name="Spieth J."/>
            <person name="Bieri T.A."/>
            <person name="Nelson J.O."/>
            <person name="Berkowicz N."/>
            <person name="Wohldmann P.E."/>
            <person name="Cook L.L."/>
            <person name="Hickenbotham M.T."/>
            <person name="Eldred J."/>
            <person name="Williams D."/>
            <person name="Bedell J.A."/>
            <person name="Mardis E.R."/>
            <person name="Clifton S.W."/>
            <person name="Chissoe S.L."/>
            <person name="Marra M.A."/>
            <person name="Raymond C."/>
            <person name="Haugen E."/>
            <person name="Gillett W."/>
            <person name="Zhou Y."/>
            <person name="James R."/>
            <person name="Phelps K."/>
            <person name="Iadanoto S."/>
            <person name="Bubb K."/>
            <person name="Simms E."/>
            <person name="Levy R."/>
            <person name="Clendenning J."/>
            <person name="Kaul R."/>
            <person name="Kent W.J."/>
            <person name="Furey T.S."/>
            <person name="Baertsch R.A."/>
            <person name="Brent M.R."/>
            <person name="Keibler E."/>
            <person name="Flicek P."/>
            <person name="Bork P."/>
            <person name="Suyama M."/>
            <person name="Bailey J.A."/>
            <person name="Portnoy M.E."/>
            <person name="Torrents D."/>
            <person name="Chinwalla A.T."/>
            <person name="Gish W.R."/>
            <person name="Eddy S.R."/>
            <person name="McPherson J.D."/>
            <person name="Olson M.V."/>
            <person name="Eichler E.E."/>
            <person name="Green E.D."/>
            <person name="Waterston R.H."/>
            <person name="Wilson R.K."/>
        </authorList>
    </citation>
    <scope>NUCLEOTIDE SEQUENCE [LARGE SCALE GENOMIC DNA]</scope>
</reference>
<reference key="2">
    <citation type="journal article" date="2003" name="Science">
        <title>Human chromosome 7: DNA sequence and biology.</title>
        <authorList>
            <person name="Scherer S.W."/>
            <person name="Cheung J."/>
            <person name="MacDonald J.R."/>
            <person name="Osborne L.R."/>
            <person name="Nakabayashi K."/>
            <person name="Herbrick J.-A."/>
            <person name="Carson A.R."/>
            <person name="Parker-Katiraee L."/>
            <person name="Skaug J."/>
            <person name="Khaja R."/>
            <person name="Zhang J."/>
            <person name="Hudek A.K."/>
            <person name="Li M."/>
            <person name="Haddad M."/>
            <person name="Duggan G.E."/>
            <person name="Fernandez B.A."/>
            <person name="Kanematsu E."/>
            <person name="Gentles S."/>
            <person name="Christopoulos C.C."/>
            <person name="Choufani S."/>
            <person name="Kwasnicka D."/>
            <person name="Zheng X.H."/>
            <person name="Lai Z."/>
            <person name="Nusskern D.R."/>
            <person name="Zhang Q."/>
            <person name="Gu Z."/>
            <person name="Lu F."/>
            <person name="Zeesman S."/>
            <person name="Nowaczyk M.J."/>
            <person name="Teshima I."/>
            <person name="Chitayat D."/>
            <person name="Shuman C."/>
            <person name="Weksberg R."/>
            <person name="Zackai E.H."/>
            <person name="Grebe T.A."/>
            <person name="Cox S.R."/>
            <person name="Kirkpatrick S.J."/>
            <person name="Rahman N."/>
            <person name="Friedman J.M."/>
            <person name="Heng H.H.Q."/>
            <person name="Pelicci P.G."/>
            <person name="Lo-Coco F."/>
            <person name="Belloni E."/>
            <person name="Shaffer L.G."/>
            <person name="Pober B."/>
            <person name="Morton C.C."/>
            <person name="Gusella J.F."/>
            <person name="Bruns G.A.P."/>
            <person name="Korf B.R."/>
            <person name="Quade B.J."/>
            <person name="Ligon A.H."/>
            <person name="Ferguson H."/>
            <person name="Higgins A.W."/>
            <person name="Leach N.T."/>
            <person name="Herrick S.R."/>
            <person name="Lemyre E."/>
            <person name="Farra C.G."/>
            <person name="Kim H.-G."/>
            <person name="Summers A.M."/>
            <person name="Gripp K.W."/>
            <person name="Roberts W."/>
            <person name="Szatmari P."/>
            <person name="Winsor E.J.T."/>
            <person name="Grzeschik K.-H."/>
            <person name="Teebi A."/>
            <person name="Minassian B.A."/>
            <person name="Kere J."/>
            <person name="Armengol L."/>
            <person name="Pujana M.A."/>
            <person name="Estivill X."/>
            <person name="Wilson M.D."/>
            <person name="Koop B.F."/>
            <person name="Tosi S."/>
            <person name="Moore G.E."/>
            <person name="Boright A.P."/>
            <person name="Zlotorynski E."/>
            <person name="Kerem B."/>
            <person name="Kroisel P.M."/>
            <person name="Petek E."/>
            <person name="Oscier D.G."/>
            <person name="Mould S.J."/>
            <person name="Doehner H."/>
            <person name="Doehner K."/>
            <person name="Rommens J.M."/>
            <person name="Vincent J.B."/>
            <person name="Venter J.C."/>
            <person name="Li P.W."/>
            <person name="Mural R.J."/>
            <person name="Adams M.D."/>
            <person name="Tsui L.-C."/>
        </authorList>
    </citation>
    <scope>NUCLEOTIDE SEQUENCE [LARGE SCALE GENOMIC DNA]</scope>
    <scope>VARIANT ARG-47</scope>
</reference>
<reference key="3">
    <citation type="submission" date="2005-09" db="EMBL/GenBank/DDBJ databases">
        <authorList>
            <person name="Mural R.J."/>
            <person name="Istrail S."/>
            <person name="Sutton G.G."/>
            <person name="Florea L."/>
            <person name="Halpern A.L."/>
            <person name="Mobarry C.M."/>
            <person name="Lippert R."/>
            <person name="Walenz B."/>
            <person name="Shatkay H."/>
            <person name="Dew I."/>
            <person name="Miller J.R."/>
            <person name="Flanigan M.J."/>
            <person name="Edwards N.J."/>
            <person name="Bolanos R."/>
            <person name="Fasulo D."/>
            <person name="Halldorsson B.V."/>
            <person name="Hannenhalli S."/>
            <person name="Turner R."/>
            <person name="Yooseph S."/>
            <person name="Lu F."/>
            <person name="Nusskern D.R."/>
            <person name="Shue B.C."/>
            <person name="Zheng X.H."/>
            <person name="Zhong F."/>
            <person name="Delcher A.L."/>
            <person name="Huson D.H."/>
            <person name="Kravitz S.A."/>
            <person name="Mouchard L."/>
            <person name="Reinert K."/>
            <person name="Remington K.A."/>
            <person name="Clark A.G."/>
            <person name="Waterman M.S."/>
            <person name="Eichler E.E."/>
            <person name="Adams M.D."/>
            <person name="Hunkapiller M.W."/>
            <person name="Myers E.W."/>
            <person name="Venter J.C."/>
        </authorList>
    </citation>
    <scope>NUCLEOTIDE SEQUENCE [LARGE SCALE GENOMIC DNA]</scope>
</reference>
<reference key="4">
    <citation type="journal article" date="2004" name="Genome Res.">
        <title>The status, quality, and expansion of the NIH full-length cDNA project: the Mammalian Gene Collection (MGC).</title>
        <authorList>
            <consortium name="The MGC Project Team"/>
        </authorList>
    </citation>
    <scope>NUCLEOTIDE SEQUENCE [LARGE SCALE MRNA] (ISOFORM 4)</scope>
    <source>
        <tissue>Brain</tissue>
    </source>
</reference>
<reference key="5">
    <citation type="journal article" date="2007" name="BMC Genomics">
        <title>The full-ORF clone resource of the German cDNA consortium.</title>
        <authorList>
            <person name="Bechtel S."/>
            <person name="Rosenfelder H."/>
            <person name="Duda A."/>
            <person name="Schmidt C.P."/>
            <person name="Ernst U."/>
            <person name="Wellenreuther R."/>
            <person name="Mehrle A."/>
            <person name="Schuster C."/>
            <person name="Bahr A."/>
            <person name="Bloecker H."/>
            <person name="Heubner D."/>
            <person name="Hoerlein A."/>
            <person name="Michel G."/>
            <person name="Wedler H."/>
            <person name="Koehrer K."/>
            <person name="Ottenwaelder B."/>
            <person name="Poustka A."/>
            <person name="Wiemann S."/>
            <person name="Schupp I."/>
        </authorList>
    </citation>
    <scope>NUCLEOTIDE SEQUENCE [LARGE SCALE MRNA] OF 36-854 (ISOFORM 3)</scope>
    <source>
        <tissue>Lymph node</tissue>
    </source>
</reference>
<reference key="6">
    <citation type="submission" date="2000-07" db="EMBL/GenBank/DDBJ databases">
        <authorList>
            <consortium name="The European IMAGE consortium"/>
        </authorList>
    </citation>
    <scope>NUCLEOTIDE SEQUENCE [LARGE SCALE MRNA] OF 587-854</scope>
</reference>
<reference key="7">
    <citation type="journal article" date="2010" name="Nature">
        <title>Gamma-secretase activating protein is a therapeutic target for Alzheimer's disease.</title>
        <authorList>
            <person name="He G."/>
            <person name="Luo W."/>
            <person name="Li P."/>
            <person name="Remmers C."/>
            <person name="Netzer W.J."/>
            <person name="Hendrick J."/>
            <person name="Bettayeb K."/>
            <person name="Flajolet M."/>
            <person name="Gorelick F."/>
            <person name="Wennogle L.P."/>
            <person name="Greengard P."/>
        </authorList>
    </citation>
    <scope>FUNCTION</scope>
    <scope>SUBCELLULAR LOCATION</scope>
    <scope>IDENTIFICATION BY MASS SPECTROMETRY</scope>
    <scope>PROTEOLYTIC PROCESSING</scope>
    <scope>IMATINIB-BINDING</scope>
    <scope>TISSUE SPECIFICITY</scope>
    <scope>INTERACTION WITH APP AND THE GAMMA-SECRETASE COMPLEX</scope>
</reference>
<organism>
    <name type="scientific">Homo sapiens</name>
    <name type="common">Human</name>
    <dbReference type="NCBI Taxonomy" id="9606"/>
    <lineage>
        <taxon>Eukaryota</taxon>
        <taxon>Metazoa</taxon>
        <taxon>Chordata</taxon>
        <taxon>Craniata</taxon>
        <taxon>Vertebrata</taxon>
        <taxon>Euteleostomi</taxon>
        <taxon>Mammalia</taxon>
        <taxon>Eutheria</taxon>
        <taxon>Euarchontoglires</taxon>
        <taxon>Primates</taxon>
        <taxon>Haplorrhini</taxon>
        <taxon>Catarrhini</taxon>
        <taxon>Hominidae</taxon>
        <taxon>Homo</taxon>
    </lineage>
</organism>
<proteinExistence type="evidence at protein level"/>
<sequence>MALRLVADFDLGKDVLPWLRAQRAVSEASGAGSGGADVLENDYESLHVLNVERNGNIIYTYKDDKGNVVFGLYDCQTRQNELLYTFEKDLQVFSCSVNSERTLLAASLVQSTKEGKRNELQPGSKCLTLLVEIHPVNNVKVLKAVDSYIWVQFLYPHIESHPLPENHLLLISEEKYIEQFRIHVAQEDGNRVVIKNSGHLPRDRIAEDFVWAQWDMSEQRLYYIDLKKSRSILKCIQFYADESYNLMFEVPLDISLSNSGFKLVNFGCDYHQYRDKFSKHLTLCVFTNHTGSLCVCYSPKCASWGQITYSVFYIHKGHSKTFTTSLENVGSHMTKGITFLNLDYYVAVYLPGHFFHLLNVQHPDLICHNLFLTGNNEMIDMLPHCPLQSLSGSLVLDCCSGKLYRALLSQSSLLQLLQNTCLDCEKMAALHCALYCGQGAQFLEAQIIQWISENVSACHSFDLIQEFIIASSYWSVYSETSNMDKLLPHSSVLTWNTEIPGITLVTEDIALPLMKVLSFKGYWEKLNSNLEYVKYAKPHFHYNNSVVRREWHNLISEEKTGKRRSAAYVRNILDNAVKVISNLEARNLGPRLTPLLQEEDSHQRLLMGLMVSELKDHFLRHLQGVEKKKIEQMVLDYISKLLDLICHIVETNWRKHNLHSWVLHFNSRGSAAEFAVFHIMTRILEATNSLFLPLPPGFHTLHTILGVQCLPLHNLLHCIDSGVLLLTETAVIRLMKDLDNTEKNEKLKFSIIVRLPPLIGQKICRLWDHPMSSNIISRNHVTRLLQNYKKQPRNSMINKSSFSVEFLPLNYFIEILTDIESSNQALYPFEGHDNVDAEFVEEAALKHTAMLLGL</sequence>